<evidence type="ECO:0000255" key="1">
    <source>
        <dbReference type="HAMAP-Rule" id="MF_01342"/>
    </source>
</evidence>
<evidence type="ECO:0000305" key="2"/>
<protein>
    <recommendedName>
        <fullName evidence="1">Large ribosomal subunit protein uL16c</fullName>
    </recommendedName>
    <alternativeName>
        <fullName evidence="2">50S ribosomal protein L16, chloroplastic</fullName>
    </alternativeName>
</protein>
<organism>
    <name type="scientific">Zygnema circumcarinatum</name>
    <name type="common">Green alga</name>
    <dbReference type="NCBI Taxonomy" id="35869"/>
    <lineage>
        <taxon>Eukaryota</taxon>
        <taxon>Viridiplantae</taxon>
        <taxon>Streptophyta</taxon>
        <taxon>Zygnematophyceae</taxon>
        <taxon>Zygnematophycidae</taxon>
        <taxon>Zygnematales</taxon>
        <taxon>Zygnemataceae</taxon>
        <taxon>Zygnema</taxon>
    </lineage>
</organism>
<proteinExistence type="inferred from homology"/>
<feature type="chain" id="PRO_0000062320" description="Large ribosomal subunit protein uL16c">
    <location>
        <begin position="1"/>
        <end position="141"/>
    </location>
</feature>
<comment type="subunit">
    <text evidence="1">Part of the 50S ribosomal subunit.</text>
</comment>
<comment type="subcellular location">
    <subcellularLocation>
        <location>Plastid</location>
        <location>Chloroplast</location>
    </subcellularLocation>
</comment>
<comment type="similarity">
    <text evidence="1">Belongs to the universal ribosomal protein uL16 family.</text>
</comment>
<name>RK16_ZYGCR</name>
<dbReference type="EMBL" id="AY958086">
    <property type="protein sequence ID" value="AAX45853.1"/>
    <property type="molecule type" value="Genomic_DNA"/>
</dbReference>
<dbReference type="RefSeq" id="YP_636491.1">
    <property type="nucleotide sequence ID" value="NC_008117.1"/>
</dbReference>
<dbReference type="SMR" id="Q32RN5"/>
<dbReference type="GeneID" id="4108173"/>
<dbReference type="GO" id="GO:0009507">
    <property type="term" value="C:chloroplast"/>
    <property type="evidence" value="ECO:0007669"/>
    <property type="project" value="UniProtKB-SubCell"/>
</dbReference>
<dbReference type="GO" id="GO:0005762">
    <property type="term" value="C:mitochondrial large ribosomal subunit"/>
    <property type="evidence" value="ECO:0007669"/>
    <property type="project" value="TreeGrafter"/>
</dbReference>
<dbReference type="GO" id="GO:0019843">
    <property type="term" value="F:rRNA binding"/>
    <property type="evidence" value="ECO:0007669"/>
    <property type="project" value="InterPro"/>
</dbReference>
<dbReference type="GO" id="GO:0003735">
    <property type="term" value="F:structural constituent of ribosome"/>
    <property type="evidence" value="ECO:0007669"/>
    <property type="project" value="InterPro"/>
</dbReference>
<dbReference type="GO" id="GO:0032543">
    <property type="term" value="P:mitochondrial translation"/>
    <property type="evidence" value="ECO:0007669"/>
    <property type="project" value="TreeGrafter"/>
</dbReference>
<dbReference type="CDD" id="cd01433">
    <property type="entry name" value="Ribosomal_L16_L10e"/>
    <property type="match status" value="1"/>
</dbReference>
<dbReference type="FunFam" id="3.90.1170.10:FF:000001">
    <property type="entry name" value="50S ribosomal protein L16"/>
    <property type="match status" value="1"/>
</dbReference>
<dbReference type="Gene3D" id="3.90.1170.10">
    <property type="entry name" value="Ribosomal protein L10e/L16"/>
    <property type="match status" value="1"/>
</dbReference>
<dbReference type="HAMAP" id="MF_01342">
    <property type="entry name" value="Ribosomal_uL16"/>
    <property type="match status" value="1"/>
</dbReference>
<dbReference type="InterPro" id="IPR047873">
    <property type="entry name" value="Ribosomal_uL16"/>
</dbReference>
<dbReference type="InterPro" id="IPR000114">
    <property type="entry name" value="Ribosomal_uL16_bact-type"/>
</dbReference>
<dbReference type="InterPro" id="IPR020798">
    <property type="entry name" value="Ribosomal_uL16_CS"/>
</dbReference>
<dbReference type="InterPro" id="IPR016180">
    <property type="entry name" value="Ribosomal_uL16_dom"/>
</dbReference>
<dbReference type="InterPro" id="IPR036920">
    <property type="entry name" value="Ribosomal_uL16_sf"/>
</dbReference>
<dbReference type="NCBIfam" id="TIGR01164">
    <property type="entry name" value="rplP_bact"/>
    <property type="match status" value="1"/>
</dbReference>
<dbReference type="PANTHER" id="PTHR12220">
    <property type="entry name" value="50S/60S RIBOSOMAL PROTEIN L16"/>
    <property type="match status" value="1"/>
</dbReference>
<dbReference type="PANTHER" id="PTHR12220:SF13">
    <property type="entry name" value="LARGE RIBOSOMAL SUBUNIT PROTEIN UL16M"/>
    <property type="match status" value="1"/>
</dbReference>
<dbReference type="Pfam" id="PF00252">
    <property type="entry name" value="Ribosomal_L16"/>
    <property type="match status" value="1"/>
</dbReference>
<dbReference type="PRINTS" id="PR00060">
    <property type="entry name" value="RIBOSOMALL16"/>
</dbReference>
<dbReference type="SUPFAM" id="SSF54686">
    <property type="entry name" value="Ribosomal protein L16p/L10e"/>
    <property type="match status" value="1"/>
</dbReference>
<dbReference type="PROSITE" id="PS00586">
    <property type="entry name" value="RIBOSOMAL_L16_1"/>
    <property type="match status" value="1"/>
</dbReference>
<dbReference type="PROSITE" id="PS00701">
    <property type="entry name" value="RIBOSOMAL_L16_2"/>
    <property type="match status" value="1"/>
</dbReference>
<reference key="1">
    <citation type="journal article" date="2005" name="BMC Biol.">
        <title>The complete chloroplast DNA sequences of the charophycean green algae Staurastrum and Zygnema reveal that the chloroplast genome underwent extensive changes during the evolution of the Zygnematales.</title>
        <authorList>
            <person name="Turmel M."/>
            <person name="Otis C."/>
            <person name="Lemieux C."/>
        </authorList>
    </citation>
    <scope>NUCLEOTIDE SEQUENCE [LARGE SCALE GENOMIC DNA]</scope>
</reference>
<geneLocation type="chloroplast"/>
<accession>Q32RN5</accession>
<keyword id="KW-0150">Chloroplast</keyword>
<keyword id="KW-0934">Plastid</keyword>
<keyword id="KW-0687">Ribonucleoprotein</keyword>
<keyword id="KW-0689">Ribosomal protein</keyword>
<gene>
    <name evidence="1" type="primary">rpl16</name>
</gene>
<sequence length="141" mass="16075">MLSPKRTRFRKQHRGRLKGISTRGNRICFGRFGLQALEPSWITSRQIEAGRRAITRYARRGGKLWIRIFPDKPITMRPAETRMGSGKGSPEYWVAVVKPGRILYEMSGVSETIARAAMRIAAFKMPIKTQFIKTPVLATIQ</sequence>